<protein>
    <recommendedName>
        <fullName>Peptide tyrosine phenylalanine 1</fullName>
    </recommendedName>
    <alternativeName>
        <fullName>Pem-PYF1</fullName>
    </alternativeName>
</protein>
<keyword id="KW-0027">Amidation</keyword>
<keyword id="KW-0903">Direct protein sequencing</keyword>
<keyword id="KW-0527">Neuropeptide</keyword>
<keyword id="KW-0964">Secreted</keyword>
<sequence length="6" mass="802">RARPRF</sequence>
<dbReference type="GO" id="GO:0005576">
    <property type="term" value="C:extracellular region"/>
    <property type="evidence" value="ECO:0007669"/>
    <property type="project" value="UniProtKB-SubCell"/>
</dbReference>
<dbReference type="GO" id="GO:0007218">
    <property type="term" value="P:neuropeptide signaling pathway"/>
    <property type="evidence" value="ECO:0007669"/>
    <property type="project" value="UniProtKB-KW"/>
</dbReference>
<organism>
    <name type="scientific">Penaeus monodon</name>
    <name type="common">Giant tiger prawn</name>
    <dbReference type="NCBI Taxonomy" id="6687"/>
    <lineage>
        <taxon>Eukaryota</taxon>
        <taxon>Metazoa</taxon>
        <taxon>Ecdysozoa</taxon>
        <taxon>Arthropoda</taxon>
        <taxon>Crustacea</taxon>
        <taxon>Multicrustacea</taxon>
        <taxon>Malacostraca</taxon>
        <taxon>Eumalacostraca</taxon>
        <taxon>Eucarida</taxon>
        <taxon>Decapoda</taxon>
        <taxon>Dendrobranchiata</taxon>
        <taxon>Penaeoidea</taxon>
        <taxon>Penaeidae</taxon>
        <taxon>Penaeus</taxon>
    </lineage>
</organism>
<name>PYF1_PENMO</name>
<evidence type="ECO:0000255" key="1"/>
<evidence type="ECO:0000269" key="2">
    <source>
    </source>
</evidence>
<evidence type="ECO:0000305" key="3"/>
<proteinExistence type="evidence at protein level"/>
<feature type="peptide" id="PRO_0000044299" description="Peptide tyrosine phenylalanine 1">
    <location>
        <begin position="1"/>
        <end position="6"/>
    </location>
</feature>
<feature type="modified residue" description="Phenylalanine amide" evidence="1">
    <location>
        <position position="6"/>
    </location>
</feature>
<accession>P84005</accession>
<comment type="function">
    <text>May act as a neurotransmitter, neuromodulator or neurohormone.</text>
</comment>
<comment type="subcellular location">
    <subcellularLocation>
        <location>Secreted</location>
    </subcellularLocation>
</comment>
<comment type="tissue specificity">
    <text evidence="2">Limited to neuronal cell bodies, neuronal processes and sinus gland.</text>
</comment>
<comment type="mass spectrometry" mass="801.5" method="MALDI" evidence="2"/>
<comment type="similarity">
    <text evidence="3">Belongs to the NPY family.</text>
</comment>
<reference key="1">
    <citation type="journal article" date="2002" name="Peptides">
        <title>Four novel PYFs: members of NPY/PP peptide superfamily from the eyestalk of the giant tiger prawn Penaeus monodon.</title>
        <authorList>
            <person name="Sithigorngul P."/>
            <person name="Pupuem J."/>
            <person name="Krungkasem C."/>
            <person name="Longyant S."/>
            <person name="Panchan N."/>
            <person name="Chaivisuthangkura P."/>
            <person name="Sithigorngul W."/>
            <person name="Petsom A."/>
        </authorList>
    </citation>
    <scope>PROTEIN SEQUENCE</scope>
    <scope>TISSUE SPECIFICITY</scope>
    <scope>MASS SPECTROMETRY</scope>
    <source>
        <tissue>Eyestalk</tissue>
    </source>
</reference>